<proteinExistence type="evidence at protein level"/>
<name>TTR1_CAEEL</name>
<keyword id="KW-0325">Glycoprotein</keyword>
<keyword id="KW-1185">Reference proteome</keyword>
<keyword id="KW-0964">Secreted</keyword>
<keyword id="KW-0732">Signal</keyword>
<sequence length="156" mass="16858">MKIALSFLFLTSTFSNAGKIGRLQSVAVSGQLNCLGKPAVGVRIDLMESDNNGEETGIIDDNDFMGYTYTDSAGFFNMSGSEVEISGIEPYVNIFHKCNDGLSPCQRQLRVDIPKSATASGPAPNETFSIGTLELSSRKVIGERRSCAYRNLTQTS</sequence>
<organism>
    <name type="scientific">Caenorhabditis elegans</name>
    <dbReference type="NCBI Taxonomy" id="6239"/>
    <lineage>
        <taxon>Eukaryota</taxon>
        <taxon>Metazoa</taxon>
        <taxon>Ecdysozoa</taxon>
        <taxon>Nematoda</taxon>
        <taxon>Chromadorea</taxon>
        <taxon>Rhabditida</taxon>
        <taxon>Rhabditina</taxon>
        <taxon>Rhabditomorpha</taxon>
        <taxon>Rhabditoidea</taxon>
        <taxon>Rhabditidae</taxon>
        <taxon>Peloderinae</taxon>
        <taxon>Caenorhabditis</taxon>
    </lineage>
</organism>
<dbReference type="EMBL" id="Z29560">
    <property type="protein sequence ID" value="CAA82658.1"/>
    <property type="molecule type" value="Genomic_DNA"/>
</dbReference>
<dbReference type="PIR" id="S41029">
    <property type="entry name" value="S41029"/>
</dbReference>
<dbReference type="RefSeq" id="NP_499204.1">
    <property type="nucleotide sequence ID" value="NM_066803.6"/>
</dbReference>
<dbReference type="SMR" id="P34502"/>
<dbReference type="BioGRID" id="51666">
    <property type="interactions" value="1"/>
</dbReference>
<dbReference type="FunCoup" id="P34502">
    <property type="interactions" value="811"/>
</dbReference>
<dbReference type="STRING" id="6239.K03H1.6.1"/>
<dbReference type="GlyCosmos" id="P34502">
    <property type="glycosylation" value="1 site, No reported glycans"/>
</dbReference>
<dbReference type="iPTMnet" id="P34502"/>
<dbReference type="PaxDb" id="6239-K03H1.6"/>
<dbReference type="PeptideAtlas" id="P34502"/>
<dbReference type="EnsemblMetazoa" id="K03H1.6.1">
    <property type="protein sequence ID" value="K03H1.6.1"/>
    <property type="gene ID" value="WBGene00010541"/>
</dbReference>
<dbReference type="GeneID" id="186958"/>
<dbReference type="KEGG" id="cel:CELE_K03H1.6"/>
<dbReference type="UCSC" id="K03H1.6">
    <property type="organism name" value="c. elegans"/>
</dbReference>
<dbReference type="AGR" id="WB:WBGene00010541"/>
<dbReference type="CTD" id="186958"/>
<dbReference type="WormBase" id="K03H1.6">
    <property type="protein sequence ID" value="CE00476"/>
    <property type="gene ID" value="WBGene00010541"/>
    <property type="gene designation" value="ttr-1"/>
</dbReference>
<dbReference type="eggNOG" id="ENOG502TFEY">
    <property type="taxonomic scope" value="Eukaryota"/>
</dbReference>
<dbReference type="GeneTree" id="ENSGT00970000196570"/>
<dbReference type="HOGENOM" id="CLU_121109_4_1_1"/>
<dbReference type="InParanoid" id="P34502"/>
<dbReference type="OMA" id="RSCAYRN"/>
<dbReference type="OrthoDB" id="5801970at2759"/>
<dbReference type="PhylomeDB" id="P34502"/>
<dbReference type="PRO" id="PR:P34502"/>
<dbReference type="Proteomes" id="UP000001940">
    <property type="component" value="Chromosome III"/>
</dbReference>
<dbReference type="Bgee" id="WBGene00010541">
    <property type="expression patterns" value="Expressed in larva and 3 other cell types or tissues"/>
</dbReference>
<dbReference type="GO" id="GO:0009986">
    <property type="term" value="C:cell surface"/>
    <property type="evidence" value="ECO:0007669"/>
    <property type="project" value="InterPro"/>
</dbReference>
<dbReference type="GO" id="GO:0005576">
    <property type="term" value="C:extracellular region"/>
    <property type="evidence" value="ECO:0007669"/>
    <property type="project" value="UniProtKB-SubCell"/>
</dbReference>
<dbReference type="Gene3D" id="2.60.40.3330">
    <property type="match status" value="1"/>
</dbReference>
<dbReference type="InterPro" id="IPR001534">
    <property type="entry name" value="Transthyretin-like"/>
</dbReference>
<dbReference type="InterPro" id="IPR038479">
    <property type="entry name" value="Transthyretin-like_sf"/>
</dbReference>
<dbReference type="PANTHER" id="PTHR21700">
    <property type="entry name" value="TRANSTHYRETIN-LIKE FAMILY PROTEIN-RELATED"/>
    <property type="match status" value="1"/>
</dbReference>
<dbReference type="PANTHER" id="PTHR21700:SF33">
    <property type="entry name" value="TRANSTHYRETIN-LIKE PROTEIN 1"/>
    <property type="match status" value="1"/>
</dbReference>
<dbReference type="Pfam" id="PF01060">
    <property type="entry name" value="TTR-52"/>
    <property type="match status" value="1"/>
</dbReference>
<feature type="signal peptide" evidence="1">
    <location>
        <begin position="1"/>
        <end position="17"/>
    </location>
</feature>
<feature type="chain" id="PRO_0000036253" description="Transthyretin-like protein 1">
    <location>
        <begin position="18"/>
        <end position="156"/>
    </location>
</feature>
<feature type="glycosylation site" description="N-linked (GlcNAc...) asparagine" evidence="2">
    <location>
        <position position="151"/>
    </location>
</feature>
<evidence type="ECO:0000255" key="1"/>
<evidence type="ECO:0000269" key="2">
    <source>
    </source>
</evidence>
<evidence type="ECO:0000305" key="3"/>
<accession>P34502</accession>
<protein>
    <recommendedName>
        <fullName>Transthyretin-like protein 1</fullName>
    </recommendedName>
</protein>
<gene>
    <name type="primary">ttr-1</name>
    <name type="ORF">K03H1.6</name>
</gene>
<comment type="subcellular location">
    <subcellularLocation>
        <location evidence="3">Secreted</location>
    </subcellularLocation>
</comment>
<comment type="similarity">
    <text evidence="3">Belongs to the nematode transthyretin-like family.</text>
</comment>
<reference key="1">
    <citation type="journal article" date="1994" name="Nature">
        <title>2.2 Mb of contiguous nucleotide sequence from chromosome III of C. elegans.</title>
        <authorList>
            <person name="Wilson R."/>
            <person name="Ainscough R."/>
            <person name="Anderson K."/>
            <person name="Baynes C."/>
            <person name="Berks M."/>
            <person name="Bonfield J."/>
            <person name="Burton J."/>
            <person name="Connell M."/>
            <person name="Copsey T."/>
            <person name="Cooper J."/>
            <person name="Coulson A."/>
            <person name="Craxton M."/>
            <person name="Dear S."/>
            <person name="Du Z."/>
            <person name="Durbin R."/>
            <person name="Favello A."/>
            <person name="Fraser A."/>
            <person name="Fulton L."/>
            <person name="Gardner A."/>
            <person name="Green P."/>
            <person name="Hawkins T."/>
            <person name="Hillier L."/>
            <person name="Jier M."/>
            <person name="Johnston L."/>
            <person name="Jones M."/>
            <person name="Kershaw J."/>
            <person name="Kirsten J."/>
            <person name="Laisster N."/>
            <person name="Latreille P."/>
            <person name="Lightning J."/>
            <person name="Lloyd C."/>
            <person name="Mortimore B."/>
            <person name="O'Callaghan M."/>
            <person name="Parsons J."/>
            <person name="Percy C."/>
            <person name="Rifken L."/>
            <person name="Roopra A."/>
            <person name="Saunders D."/>
            <person name="Shownkeen R."/>
            <person name="Sims M."/>
            <person name="Smaldon N."/>
            <person name="Smith A."/>
            <person name="Smith M."/>
            <person name="Sonnhammer E."/>
            <person name="Staden R."/>
            <person name="Sulston J."/>
            <person name="Thierry-Mieg J."/>
            <person name="Thomas K."/>
            <person name="Vaudin M."/>
            <person name="Vaughan K."/>
            <person name="Waterston R."/>
            <person name="Watson A."/>
            <person name="Weinstock L."/>
            <person name="Wilkinson-Sproat J."/>
            <person name="Wohldman P."/>
        </authorList>
    </citation>
    <scope>NUCLEOTIDE SEQUENCE [LARGE SCALE GENOMIC DNA]</scope>
    <source>
        <strain>Bristol N2</strain>
    </source>
</reference>
<reference key="2">
    <citation type="journal article" date="1998" name="Science">
        <title>Genome sequence of the nematode C. elegans: a platform for investigating biology.</title>
        <authorList>
            <consortium name="The C. elegans sequencing consortium"/>
        </authorList>
    </citation>
    <scope>NUCLEOTIDE SEQUENCE [LARGE SCALE GENOMIC DNA]</scope>
    <source>
        <strain>Bristol N2</strain>
    </source>
</reference>
<reference key="3">
    <citation type="journal article" date="2007" name="Mol. Cell. Proteomics">
        <title>Proteomics reveals N-linked glycoprotein diversity in Caenorhabditis elegans and suggests an atypical translocation mechanism for integral membrane proteins.</title>
        <authorList>
            <person name="Kaji H."/>
            <person name="Kamiie J."/>
            <person name="Kawakami H."/>
            <person name="Kido K."/>
            <person name="Yamauchi Y."/>
            <person name="Shinkawa T."/>
            <person name="Taoka M."/>
            <person name="Takahashi N."/>
            <person name="Isobe T."/>
        </authorList>
    </citation>
    <scope>GLYCOSYLATION [LARGE SCALE ANALYSIS] AT ASN-151</scope>
    <scope>IDENTIFICATION BY MASS SPECTROMETRY</scope>
    <source>
        <strain>Bristol N2</strain>
    </source>
</reference>